<reference key="1">
    <citation type="online journal article" date="1995" name="Plant Gene Register">
        <title>Cloning and nucleotide sequence of a cDNA encoding phospholipase D from Arabidopsis.</title>
        <authorList>
            <person name="Dyer J.H."/>
            <person name="Zheng L."/>
            <person name="Wang X."/>
        </authorList>
        <locator>PGR95-096</locator>
    </citation>
    <scope>NUCLEOTIDE SEQUENCE [MRNA]</scope>
    <source>
        <strain>cv. Columbia</strain>
    </source>
</reference>
<reference key="2">
    <citation type="journal article" date="2000" name="DNA Res.">
        <title>Structural analysis of Arabidopsis thaliana chromosome 3. I. Sequence features of the regions of 4,504,864 bp covered by sixty P1 and TAC clones.</title>
        <authorList>
            <person name="Sato S."/>
            <person name="Nakamura Y."/>
            <person name="Kaneko T."/>
            <person name="Katoh T."/>
            <person name="Asamizu E."/>
            <person name="Tabata S."/>
        </authorList>
    </citation>
    <scope>NUCLEOTIDE SEQUENCE [LARGE SCALE GENOMIC DNA]</scope>
    <source>
        <strain>cv. Columbia</strain>
    </source>
</reference>
<reference key="3">
    <citation type="journal article" date="2017" name="Plant J.">
        <title>Araport11: a complete reannotation of the Arabidopsis thaliana reference genome.</title>
        <authorList>
            <person name="Cheng C.Y."/>
            <person name="Krishnakumar V."/>
            <person name="Chan A.P."/>
            <person name="Thibaud-Nissen F."/>
            <person name="Schobel S."/>
            <person name="Town C.D."/>
        </authorList>
    </citation>
    <scope>GENOME REANNOTATION</scope>
    <source>
        <strain>cv. Columbia</strain>
    </source>
</reference>
<reference key="4">
    <citation type="submission" date="2006-07" db="EMBL/GenBank/DDBJ databases">
        <title>Large-scale analysis of RIKEN Arabidopsis full-length (RAFL) cDNAs.</title>
        <authorList>
            <person name="Totoki Y."/>
            <person name="Seki M."/>
            <person name="Ishida J."/>
            <person name="Nakajima M."/>
            <person name="Enju A."/>
            <person name="Kamiya A."/>
            <person name="Narusaka M."/>
            <person name="Shin-i T."/>
            <person name="Nakagawa M."/>
            <person name="Sakamoto N."/>
            <person name="Oishi K."/>
            <person name="Kohara Y."/>
            <person name="Kobayashi M."/>
            <person name="Toyoda A."/>
            <person name="Sakaki Y."/>
            <person name="Sakurai T."/>
            <person name="Iida K."/>
            <person name="Akiyama K."/>
            <person name="Satou M."/>
            <person name="Toyoda T."/>
            <person name="Konagaya A."/>
            <person name="Carninci P."/>
            <person name="Kawai J."/>
            <person name="Hayashizaki Y."/>
            <person name="Shinozaki K."/>
        </authorList>
    </citation>
    <scope>NUCLEOTIDE SEQUENCE [LARGE SCALE MRNA]</scope>
    <source>
        <strain>cv. Columbia</strain>
    </source>
</reference>
<reference key="5">
    <citation type="journal article" date="2003" name="Science">
        <title>Empirical analysis of transcriptional activity in the Arabidopsis genome.</title>
        <authorList>
            <person name="Yamada K."/>
            <person name="Lim J."/>
            <person name="Dale J.M."/>
            <person name="Chen H."/>
            <person name="Shinn P."/>
            <person name="Palm C.J."/>
            <person name="Southwick A.M."/>
            <person name="Wu H.C."/>
            <person name="Kim C.J."/>
            <person name="Nguyen M."/>
            <person name="Pham P.K."/>
            <person name="Cheuk R.F."/>
            <person name="Karlin-Newmann G."/>
            <person name="Liu S.X."/>
            <person name="Lam B."/>
            <person name="Sakano H."/>
            <person name="Wu T."/>
            <person name="Yu G."/>
            <person name="Miranda M."/>
            <person name="Quach H.L."/>
            <person name="Tripp M."/>
            <person name="Chang C.H."/>
            <person name="Lee J.M."/>
            <person name="Toriumi M.J."/>
            <person name="Chan M.M."/>
            <person name="Tang C.C."/>
            <person name="Onodera C.S."/>
            <person name="Deng J.M."/>
            <person name="Akiyama K."/>
            <person name="Ansari Y."/>
            <person name="Arakawa T."/>
            <person name="Banh J."/>
            <person name="Banno F."/>
            <person name="Bowser L."/>
            <person name="Brooks S.Y."/>
            <person name="Carninci P."/>
            <person name="Chao Q."/>
            <person name="Choy N."/>
            <person name="Enju A."/>
            <person name="Goldsmith A.D."/>
            <person name="Gurjal M."/>
            <person name="Hansen N.F."/>
            <person name="Hayashizaki Y."/>
            <person name="Johnson-Hopson C."/>
            <person name="Hsuan V.W."/>
            <person name="Iida K."/>
            <person name="Karnes M."/>
            <person name="Khan S."/>
            <person name="Koesema E."/>
            <person name="Ishida J."/>
            <person name="Jiang P.X."/>
            <person name="Jones T."/>
            <person name="Kawai J."/>
            <person name="Kamiya A."/>
            <person name="Meyers C."/>
            <person name="Nakajima M."/>
            <person name="Narusaka M."/>
            <person name="Seki M."/>
            <person name="Sakurai T."/>
            <person name="Satou M."/>
            <person name="Tamse R."/>
            <person name="Vaysberg M."/>
            <person name="Wallender E.K."/>
            <person name="Wong C."/>
            <person name="Yamamura Y."/>
            <person name="Yuan S."/>
            <person name="Shinozaki K."/>
            <person name="Davis R.W."/>
            <person name="Theologis A."/>
            <person name="Ecker J.R."/>
        </authorList>
    </citation>
    <scope>NUCLEOTIDE SEQUENCE [LARGE SCALE MRNA] OF 273-810</scope>
    <source>
        <strain>cv. Columbia</strain>
    </source>
</reference>
<reference key="6">
    <citation type="journal article" date="1997" name="J. Biol. Chem.">
        <title>Molecular heterogeneity of phospholipase D (PLD). Cloning of PLDgamma and regulation of plant PLDgamma, -beta, and -alpha by polyphosphoinositides and calcium.</title>
        <authorList>
            <person name="Qin W."/>
            <person name="Pappan K."/>
            <person name="Wang X."/>
        </authorList>
    </citation>
    <scope>CATALYTIC ACTIVITY</scope>
    <scope>COFACTOR</scope>
    <scope>ACTIVITY REGULATION</scope>
</reference>
<reference key="7">
    <citation type="journal article" date="1997" name="Plant Cell">
        <title>Antisense suppression of phospholipase D alpha retards abscisic acid- and ethylene-promoted senescence of postharvest Arabidopsis leaves.</title>
        <authorList>
            <person name="Fan L."/>
            <person name="Zheng S."/>
            <person name="Wang X."/>
        </authorList>
    </citation>
    <scope>FUNCTION</scope>
    <scope>INDUCTION BY ABSCISIC ACID AND ETHYLENE</scope>
</reference>
<reference key="8">
    <citation type="journal article" date="1998" name="Arch. Biochem. Biophys.">
        <title>Substrate selectivities and lipid modulation of plant phospholipase D alpha, -beta, and -gamma.</title>
        <authorList>
            <person name="Pappan K."/>
            <person name="Austin-Brown S."/>
            <person name="Chapman K.D."/>
            <person name="Wang X."/>
        </authorList>
    </citation>
    <scope>SUBSTRATE SPECIFICITY</scope>
</reference>
<reference key="9">
    <citation type="journal article" date="1999" name="Arch. Biochem. Biophys.">
        <title>Plant phospholipase Dalpha is an acidic phospholipase active at near-physiological Ca(2+) concentrations.</title>
        <authorList>
            <person name="Pappan K."/>
            <person name="Wang X."/>
        </authorList>
    </citation>
    <scope>FUNCTION</scope>
    <scope>CATALYTIC ACTIVITY</scope>
    <scope>BIOPHYSICOCHEMICAL PROPERTIES</scope>
</reference>
<reference key="10">
    <citation type="journal article" date="1999" name="Plant Physiol.">
        <title>Subcellular distribution and tissue expression of phospholipase Dalpha, Dbeta, and Dgamma in Arabidopsis.</title>
        <authorList>
            <person name="Fan L."/>
            <person name="Zheng S."/>
            <person name="Cui D."/>
            <person name="Wang X."/>
        </authorList>
    </citation>
    <scope>SUBCELLULAR LOCATION</scope>
    <scope>TISSUE SPECIFICITY</scope>
</reference>
<reference key="11">
    <citation type="journal article" date="2000" name="J. Biol. Chem.">
        <title>Distinct Ca2+ binding properties of novel C2 domains of plant phospholipase dalpha and beta.</title>
        <authorList>
            <person name="Zheng L."/>
            <person name="Krishnamoorthi R."/>
            <person name="Zolkiewski M."/>
            <person name="Wang X."/>
        </authorList>
    </citation>
    <scope>DOMAIN</scope>
    <scope>3D-STRUCTURE MODELING</scope>
</reference>
<reference key="12">
    <citation type="journal article" date="2000" name="Plant Cell">
        <title>Involvement of phospholipase D in wound-induced accumulation of jasmonic acid in arabidopsis.</title>
        <authorList>
            <person name="Wang C."/>
            <person name="Zien C.A."/>
            <person name="Afitlhile M."/>
            <person name="Welti R."/>
            <person name="Hildebrand D.F."/>
            <person name="Wang X."/>
        </authorList>
    </citation>
    <scope>FUNCTION</scope>
    <scope>SUBCELLULAR LOCATION</scope>
</reference>
<reference key="13">
    <citation type="journal article" date="2001" name="Biochim. Biophys. Acta">
        <title>In vivo substrates and the contribution of the common phospholipase D, PLDalpha, to wound-induced metabolism of lipids in Arabidopsis.</title>
        <authorList>
            <person name="Zien C.A."/>
            <person name="Wang C."/>
            <person name="Wang X."/>
            <person name="Welti R."/>
        </authorList>
    </citation>
    <scope>FUNCTION</scope>
</reference>
<reference key="14">
    <citation type="journal article" date="2001" name="Plant Physiol.">
        <title>A novel phospholipase d of Arabidopsis that is activated by oleic acid and associated with the plasma membrane.</title>
        <authorList>
            <person name="Wang C."/>
            <person name="Wang X."/>
        </authorList>
    </citation>
    <scope>SUBCELLULAR LOCATION</scope>
    <source>
        <strain>cv. Columbia</strain>
    </source>
</reference>
<reference key="15">
    <citation type="journal article" date="2002" name="Plant Physiol.">
        <title>The Arabidopsis phospholipase D family. Characterization of a calcium-independent and phosphatidylcholine-selective PLD zeta 1 with distinct regulatory domains.</title>
        <authorList>
            <person name="Qin C."/>
            <person name="Wang X."/>
        </authorList>
    </citation>
    <scope>GENE FAMILY</scope>
    <scope>NOMENCLATURE</scope>
</reference>
<reference key="16">
    <citation type="journal article" date="2004" name="J. Biol. Chem.">
        <title>Arabidopsis phospholipase Dalpha1 interacts with the heterotrimeric G-protein alpha-subunit through a motif analogous to the DRY motif in G-protein-coupled receptors.</title>
        <authorList>
            <person name="Zhao J."/>
            <person name="Wang X."/>
        </authorList>
    </citation>
    <scope>FUNCTION</scope>
    <scope>INTERACTION WITH GPA1</scope>
    <scope>MUTAGENESIS OF GLU-563; LYS-564 AND PHE-565</scope>
</reference>
<reference key="17">
    <citation type="journal article" date="2006" name="J. Plant Physiol.">
        <title>Suppression of phospholipase Dalpha1 induces freezing tolerance in Arabidopsis: response of cold-responsive genes and osmolyte accumulation.</title>
        <authorList>
            <person name="Rajashekar C.B."/>
            <person name="Zhou H.E."/>
            <person name="Zhang Y."/>
            <person name="Li W."/>
            <person name="Wang X."/>
        </authorList>
    </citation>
    <scope>FUNCTION</scope>
</reference>
<reference key="18">
    <citation type="journal article" date="2006" name="Science">
        <title>A bifurcating pathway directs abscisic acid effects on stomatal closure and opening in Arabidopsis.</title>
        <authorList>
            <person name="Mishra G."/>
            <person name="Zhang W."/>
            <person name="Deng F."/>
            <person name="Zhao J."/>
            <person name="Wang X."/>
        </authorList>
    </citation>
    <scope>FUNCTION</scope>
    <scope>DISRUPTION PHENOTYPE</scope>
    <scope>INTERACTION WITH GPA1</scope>
</reference>
<reference key="19">
    <citation type="journal article" date="2007" name="J. Exp. Bot.">
        <title>Early PLDalpha-mediated events in response to progressive drought stress in Arabidopsis: a transcriptome analysis.</title>
        <authorList>
            <person name="Mane S.P."/>
            <person name="Vasquez-Robinet C."/>
            <person name="Sioson A.A."/>
            <person name="Heath L.S."/>
            <person name="Grene R."/>
        </authorList>
    </citation>
    <scope>FUNCTION</scope>
</reference>
<reference key="20">
    <citation type="journal article" date="2007" name="Mol. Cell. Proteomics">
        <title>Multidimensional protein identification technology (MudPIT) analysis of ubiquitinated proteins in plants.</title>
        <authorList>
            <person name="Maor R."/>
            <person name="Jones A."/>
            <person name="Nuehse T.S."/>
            <person name="Studholme D.J."/>
            <person name="Peck S.C."/>
            <person name="Shirasu K."/>
        </authorList>
    </citation>
    <scope>IDENTIFICATION BY MASS SPECTROMETRY [LARGE SCALE ANALYSIS]</scope>
    <source>
        <strain>cv. Landsberg erecta</strain>
    </source>
</reference>
<reference key="21">
    <citation type="journal article" date="2007" name="Plant J.">
        <title>Enhancing seed quality and viability by suppressing phospholipase D in Arabidopsis.</title>
        <authorList>
            <person name="Devaiah S.P."/>
            <person name="Pan X."/>
            <person name="Hong Y."/>
            <person name="Roth M."/>
            <person name="Welti R."/>
            <person name="Wang X."/>
        </authorList>
    </citation>
    <scope>FUNCTION</scope>
    <scope>DISRUPTION PHENOTYPE</scope>
</reference>
<reference key="22">
    <citation type="journal article" date="2009" name="Plant Cell Physiol.">
        <title>Multiple PLDs required for high salinity and water deficit tolerance in plants.</title>
        <authorList>
            <person name="Bargmann B.O."/>
            <person name="Laxalt A.M."/>
            <person name="ter Riet B."/>
            <person name="van Schooten B."/>
            <person name="Merquiol E."/>
            <person name="Testerink C."/>
            <person name="Haring M.A."/>
            <person name="Bartels D."/>
            <person name="Munnik T."/>
        </authorList>
    </citation>
    <scope>INDUCTION</scope>
    <scope>DISRUPTION PHENOTYPE</scope>
</reference>
<reference key="23">
    <citation type="journal article" date="2012" name="Plant Cell">
        <title>Phosphatidic acid regulates microtubule organization by interacting with MAP65-1 in response to salt stress in Arabidopsis.</title>
        <authorList>
            <person name="Zhang Q."/>
            <person name="Lin F."/>
            <person name="Mao T."/>
            <person name="Nie J."/>
            <person name="Yan M."/>
            <person name="Yuan M."/>
            <person name="Zhang W."/>
        </authorList>
    </citation>
    <scope>FUNCTION</scope>
    <scope>DISRUPTION PHENOTYPE</scope>
</reference>
<reference key="24">
    <citation type="journal article" date="2012" name="Plant Physiol.">
        <title>Cooperative function of PLDdelta and PLDalpha1 in abscisic acid-induced stomatal closure in Arabidopsis.</title>
        <authorList>
            <person name="Uraji M."/>
            <person name="Katagiri T."/>
            <person name="Okuma E."/>
            <person name="Ye W."/>
            <person name="Hossain M.A."/>
            <person name="Masuda C."/>
            <person name="Miura A."/>
            <person name="Nakamura Y."/>
            <person name="Mori I.C."/>
            <person name="Shinozaki K."/>
            <person name="Murata Y."/>
        </authorList>
    </citation>
    <scope>FUNCTION</scope>
    <scope>INDUCTION BY ABSCISIC ACID</scope>
    <scope>DISRUPTION PHENOTYPE</scope>
</reference>
<reference key="25">
    <citation type="journal article" date="2013" name="Methods Mol. Biol.">
        <title>Biochemical analysis of the interaction between phospholipase Dalpha1 and GTP-binding protein alpha-subunit from Arabidopsis thaliana.</title>
        <authorList>
            <person name="Zhao J."/>
            <person name="Wang X."/>
        </authorList>
    </citation>
    <scope>INTERACTION WITH GPA1</scope>
</reference>
<reference key="26">
    <citation type="journal article" date="2020" name="Cell Res.">
        <title>Crystal structure of plant PLDalpha1 reveals catalytic and regulatory mechanisms of eukaryotic phospholipase D.</title>
        <authorList>
            <person name="Li J."/>
            <person name="Yu F."/>
            <person name="Guo H."/>
            <person name="Xiong R."/>
            <person name="Zhang W."/>
            <person name="He F."/>
            <person name="Zhang M."/>
            <person name="Zhang P."/>
        </authorList>
    </citation>
    <scope>X-RAY CRYSTALLOGRAPHY (1.80 ANGSTROMS) IN COMPLEX WITH 1,2-DIACYL-SN-GLYCERO-3-PHOSPHATE AND CALCIUM ION</scope>
    <scope>COFACTOR</scope>
</reference>
<feature type="chain" id="PRO_0000218808" description="Phospholipase D alpha 1">
    <location>
        <begin position="1"/>
        <end position="810"/>
    </location>
</feature>
<feature type="domain" description="C2" evidence="1">
    <location>
        <begin position="1"/>
        <end position="126"/>
    </location>
</feature>
<feature type="domain" description="PLD phosphodiesterase 1" evidence="2">
    <location>
        <begin position="327"/>
        <end position="366"/>
    </location>
</feature>
<feature type="domain" description="PLD phosphodiesterase 2" evidence="2">
    <location>
        <begin position="656"/>
        <end position="683"/>
    </location>
</feature>
<feature type="active site" evidence="2">
    <location>
        <position position="332"/>
    </location>
</feature>
<feature type="active site" evidence="2">
    <location>
        <position position="334"/>
    </location>
</feature>
<feature type="active site" evidence="2">
    <location>
        <position position="339"/>
    </location>
</feature>
<feature type="active site" evidence="2">
    <location>
        <position position="661"/>
    </location>
</feature>
<feature type="active site" evidence="2">
    <location>
        <position position="663"/>
    </location>
</feature>
<feature type="active site" evidence="2">
    <location>
        <position position="668"/>
    </location>
</feature>
<feature type="binding site" evidence="18 26 27">
    <location>
        <position position="187"/>
    </location>
    <ligand>
        <name>Ca(2+)</name>
        <dbReference type="ChEBI" id="CHEBI:29108"/>
    </ligand>
</feature>
<feature type="binding site" evidence="18 26">
    <location>
        <position position="332"/>
    </location>
    <ligand>
        <name>a 1,2-diacyl-sn-glycero-3-phosphate</name>
        <dbReference type="ChEBI" id="CHEBI:58608"/>
    </ligand>
</feature>
<feature type="binding site" evidence="18 26 27">
    <location>
        <position position="372"/>
    </location>
    <ligand>
        <name>Ca(2+)</name>
        <dbReference type="ChEBI" id="CHEBI:29108"/>
    </ligand>
</feature>
<feature type="binding site" evidence="18 26 27">
    <location>
        <position position="406"/>
    </location>
    <ligand>
        <name>Ca(2+)</name>
        <dbReference type="ChEBI" id="CHEBI:29108"/>
    </ligand>
</feature>
<feature type="binding site" evidence="18 26">
    <location>
        <position position="522"/>
    </location>
    <ligand>
        <name>a 1,2-diacyl-sn-glycero-3-phosphate</name>
        <dbReference type="ChEBI" id="CHEBI:58608"/>
    </ligand>
</feature>
<feature type="binding site" evidence="18 26">
    <location>
        <position position="661"/>
    </location>
    <ligand>
        <name>a 1,2-diacyl-sn-glycero-3-phosphate</name>
        <dbReference type="ChEBI" id="CHEBI:58608"/>
    </ligand>
</feature>
<feature type="binding site" evidence="18 26 27">
    <location>
        <position position="722"/>
    </location>
    <ligand>
        <name>Ca(2+)</name>
        <dbReference type="ChEBI" id="CHEBI:29108"/>
    </ligand>
</feature>
<feature type="mutagenesis site" description="Decreased GPA1 binding." evidence="9">
    <original>E</original>
    <variation>A</variation>
    <location>
        <position position="563"/>
    </location>
</feature>
<feature type="mutagenesis site" description="Loss of GPA1 binding." evidence="9">
    <original>K</original>
    <variation>A</variation>
    <location>
        <position position="564"/>
    </location>
</feature>
<feature type="mutagenesis site" description="Decreased GPA1 binding." evidence="9">
    <original>F</original>
    <variation>A</variation>
    <location>
        <position position="565"/>
    </location>
</feature>
<feature type="sequence conflict" description="In Ref. 1; AAC49274." evidence="23" ref="1">
    <original>QH</original>
    <variation>HD</variation>
    <location>
        <begin position="3"/>
        <end position="4"/>
    </location>
</feature>
<feature type="sequence conflict" description="In Ref. 1; AAC49274." evidence="23" ref="1">
    <original>R</original>
    <variation>M</variation>
    <location>
        <position position="26"/>
    </location>
</feature>
<feature type="sequence conflict" description="In Ref. 1; AAC49274." evidence="23" ref="1">
    <original>Q</original>
    <variation>R</variation>
    <location>
        <position position="49"/>
    </location>
</feature>
<feature type="sequence conflict" description="In Ref. 1; AAC49274." evidence="23" ref="1">
    <original>N</original>
    <variation>I</variation>
    <location>
        <position position="99"/>
    </location>
</feature>
<feature type="sequence conflict" description="In Ref. 1; AAC49274." evidence="23" ref="1">
    <location>
        <position position="121"/>
    </location>
</feature>
<feature type="sequence conflict" description="In Ref. 1; AAC49274." evidence="23" ref="1">
    <original>A</original>
    <variation>T</variation>
    <location>
        <position position="218"/>
    </location>
</feature>
<feature type="sequence conflict" description="In Ref. 1; AAC49274." evidence="23" ref="1">
    <original>GS</original>
    <variation>ER</variation>
    <location>
        <begin position="301"/>
        <end position="302"/>
    </location>
</feature>
<feature type="sequence conflict" description="In Ref. 1; AAC49274." evidence="23" ref="1">
    <original>D</original>
    <variation>E</variation>
    <location>
        <position position="435"/>
    </location>
</feature>
<feature type="sequence conflict" description="In Ref. 1; AAC49274." evidence="23" ref="1">
    <original>EK</original>
    <variation>DQ</variation>
    <location>
        <begin position="560"/>
        <end position="561"/>
    </location>
</feature>
<feature type="sequence conflict" description="In Ref. 1; AAC49274." evidence="23" ref="1">
    <original>RAQGLE</original>
    <variation>KGLEGP</variation>
    <location>
        <begin position="607"/>
        <end position="612"/>
    </location>
</feature>
<feature type="sequence conflict" description="In Ref. 1; AAC49274." evidence="23" ref="1">
    <original>SSLEC</original>
    <variation>KLSES</variation>
    <location>
        <begin position="735"/>
        <end position="739"/>
    </location>
</feature>
<feature type="strand" evidence="29">
    <location>
        <begin position="4"/>
        <end position="18"/>
    </location>
</feature>
<feature type="strand" evidence="29">
    <location>
        <begin position="50"/>
        <end position="56"/>
    </location>
</feature>
<feature type="strand" evidence="29">
    <location>
        <begin position="59"/>
        <end position="63"/>
    </location>
</feature>
<feature type="strand" evidence="29">
    <location>
        <begin position="71"/>
        <end position="73"/>
    </location>
</feature>
<feature type="strand" evidence="29">
    <location>
        <begin position="75"/>
        <end position="97"/>
    </location>
</feature>
<feature type="strand" evidence="29">
    <location>
        <begin position="104"/>
        <end position="112"/>
    </location>
</feature>
<feature type="helix" evidence="29">
    <location>
        <begin position="113"/>
        <end position="115"/>
    </location>
</feature>
<feature type="turn" evidence="29">
    <location>
        <begin position="116"/>
        <end position="118"/>
    </location>
</feature>
<feature type="strand" evidence="29">
    <location>
        <begin position="122"/>
        <end position="127"/>
    </location>
</feature>
<feature type="strand" evidence="29">
    <location>
        <begin position="133"/>
        <end position="135"/>
    </location>
</feature>
<feature type="strand" evidence="28">
    <location>
        <begin position="137"/>
        <end position="139"/>
    </location>
</feature>
<feature type="strand" evidence="29">
    <location>
        <begin position="141"/>
        <end position="150"/>
    </location>
</feature>
<feature type="helix" evidence="29">
    <location>
        <begin position="151"/>
        <end position="153"/>
    </location>
</feature>
<feature type="turn" evidence="29">
    <location>
        <begin position="155"/>
        <end position="159"/>
    </location>
</feature>
<feature type="strand" evidence="29">
    <location>
        <begin position="177"/>
        <end position="188"/>
    </location>
</feature>
<feature type="strand" evidence="29">
    <location>
        <begin position="203"/>
        <end position="205"/>
    </location>
</feature>
<feature type="helix" evidence="29">
    <location>
        <begin position="211"/>
        <end position="221"/>
    </location>
</feature>
<feature type="strand" evidence="29">
    <location>
        <begin position="223"/>
        <end position="231"/>
    </location>
</feature>
<feature type="turn" evidence="29">
    <location>
        <begin position="248"/>
        <end position="251"/>
    </location>
</feature>
<feature type="helix" evidence="29">
    <location>
        <begin position="254"/>
        <end position="263"/>
    </location>
</feature>
<feature type="strand" evidence="29">
    <location>
        <begin position="267"/>
        <end position="273"/>
    </location>
</feature>
<feature type="helix" evidence="29">
    <location>
        <begin position="275"/>
        <end position="277"/>
    </location>
</feature>
<feature type="helix" evidence="29">
    <location>
        <begin position="280"/>
        <end position="285"/>
    </location>
</feature>
<feature type="helix" evidence="29">
    <location>
        <begin position="292"/>
        <end position="299"/>
    </location>
</feature>
<feature type="strand" evidence="29">
    <location>
        <begin position="305"/>
        <end position="309"/>
    </location>
</feature>
<feature type="helix" evidence="28">
    <location>
        <begin position="319"/>
        <end position="325"/>
    </location>
</feature>
<feature type="strand" evidence="29">
    <location>
        <begin position="335"/>
        <end position="341"/>
    </location>
</feature>
<feature type="strand" evidence="29">
    <location>
        <begin position="351"/>
        <end position="359"/>
    </location>
</feature>
<feature type="turn" evidence="29">
    <location>
        <begin position="376"/>
        <end position="381"/>
    </location>
</feature>
<feature type="helix" evidence="29">
    <location>
        <begin position="396"/>
        <end position="398"/>
    </location>
</feature>
<feature type="strand" evidence="29">
    <location>
        <begin position="408"/>
        <end position="414"/>
    </location>
</feature>
<feature type="helix" evidence="29">
    <location>
        <begin position="415"/>
        <end position="431"/>
    </location>
</feature>
<feature type="helix" evidence="29">
    <location>
        <begin position="440"/>
        <end position="443"/>
    </location>
</feature>
<feature type="turn" evidence="29">
    <location>
        <begin position="444"/>
        <end position="446"/>
    </location>
</feature>
<feature type="strand" evidence="29">
    <location>
        <begin position="462"/>
        <end position="471"/>
    </location>
</feature>
<feature type="turn" evidence="29">
    <location>
        <begin position="472"/>
        <end position="474"/>
    </location>
</feature>
<feature type="helix" evidence="29">
    <location>
        <begin position="482"/>
        <end position="487"/>
    </location>
</feature>
<feature type="strand" evidence="29">
    <location>
        <begin position="494"/>
        <end position="500"/>
    </location>
</feature>
<feature type="helix" evidence="29">
    <location>
        <begin position="501"/>
        <end position="512"/>
    </location>
</feature>
<feature type="strand" evidence="29">
    <location>
        <begin position="514"/>
        <end position="522"/>
    </location>
</feature>
<feature type="helix" evidence="29">
    <location>
        <begin position="528"/>
        <end position="530"/>
    </location>
</feature>
<feature type="strand" evidence="29">
    <location>
        <begin position="534"/>
        <end position="536"/>
    </location>
</feature>
<feature type="helix" evidence="29">
    <location>
        <begin position="538"/>
        <end position="540"/>
    </location>
</feature>
<feature type="helix" evidence="29">
    <location>
        <begin position="547"/>
        <end position="561"/>
    </location>
</feature>
<feature type="strand" evidence="29">
    <location>
        <begin position="566"/>
        <end position="570"/>
    </location>
</feature>
<feature type="helix" evidence="29">
    <location>
        <begin position="582"/>
        <end position="608"/>
    </location>
</feature>
<feature type="helix" evidence="29">
    <location>
        <begin position="615"/>
        <end position="617"/>
    </location>
</feature>
<feature type="strand" evidence="29">
    <location>
        <begin position="619"/>
        <end position="627"/>
    </location>
</feature>
<feature type="helix" evidence="29">
    <location>
        <begin position="646"/>
        <end position="653"/>
    </location>
</feature>
<feature type="strand" evidence="29">
    <location>
        <begin position="655"/>
        <end position="657"/>
    </location>
</feature>
<feature type="strand" evidence="29">
    <location>
        <begin position="663"/>
        <end position="667"/>
    </location>
</feature>
<feature type="turn" evidence="29">
    <location>
        <begin position="668"/>
        <end position="670"/>
    </location>
</feature>
<feature type="strand" evidence="29">
    <location>
        <begin position="671"/>
        <end position="676"/>
    </location>
</feature>
<feature type="helix" evidence="29">
    <location>
        <begin position="681"/>
        <end position="684"/>
    </location>
</feature>
<feature type="strand" evidence="29">
    <location>
        <begin position="685"/>
        <end position="697"/>
    </location>
</feature>
<feature type="strand" evidence="29">
    <location>
        <begin position="703"/>
        <end position="706"/>
    </location>
</feature>
<feature type="helix" evidence="29">
    <location>
        <begin position="711"/>
        <end position="724"/>
    </location>
</feature>
<feature type="helix" evidence="29">
    <location>
        <begin position="729"/>
        <end position="732"/>
    </location>
</feature>
<feature type="helix" evidence="29">
    <location>
        <begin position="737"/>
        <end position="755"/>
    </location>
</feature>
<feature type="strand" evidence="29">
    <location>
        <begin position="767"/>
        <end position="769"/>
    </location>
</feature>
<feature type="strand" evidence="29">
    <location>
        <begin position="771"/>
        <end position="774"/>
    </location>
</feature>
<feature type="strand" evidence="29">
    <location>
        <begin position="780"/>
        <end position="783"/>
    </location>
</feature>
<feature type="strand" evidence="29">
    <location>
        <begin position="786"/>
        <end position="788"/>
    </location>
</feature>
<feature type="strand" evidence="29">
    <location>
        <begin position="802"/>
        <end position="804"/>
    </location>
</feature>
<feature type="helix" evidence="29">
    <location>
        <begin position="806"/>
        <end position="809"/>
    </location>
</feature>
<keyword id="KW-0002">3D-structure</keyword>
<keyword id="KW-0938">Abscisic acid signaling pathway</keyword>
<keyword id="KW-0106">Calcium</keyword>
<keyword id="KW-1003">Cell membrane</keyword>
<keyword id="KW-0963">Cytoplasm</keyword>
<keyword id="KW-0968">Cytoplasmic vesicle</keyword>
<keyword id="KW-0256">Endoplasmic reticulum</keyword>
<keyword id="KW-0936">Ethylene signaling pathway</keyword>
<keyword id="KW-0378">Hydrolase</keyword>
<keyword id="KW-0442">Lipid degradation</keyword>
<keyword id="KW-0443">Lipid metabolism</keyword>
<keyword id="KW-0472">Membrane</keyword>
<keyword id="KW-0479">Metal-binding</keyword>
<keyword id="KW-0492">Microsome</keyword>
<keyword id="KW-0496">Mitochondrion</keyword>
<keyword id="KW-1185">Reference proteome</keyword>
<keyword id="KW-0677">Repeat</keyword>
<keyword id="KW-0926">Vacuole</keyword>
<sequence length="810" mass="91848">MAQHLLHGTLHATIYEVDALHGGGVRQGFLGKILANVEETIGVGKGETQLYATIDLQKARVGRTRKIKNEPKNPKWYESFHIYCAHLASDIIFTVKDDNPIGATLIGRAYIPVDQVINGEEVDQWVEILDNDRNPIQGGSKIHVKLQYFHVEEDRNWNMGIKSAKFPGVPYTFFSQRQGCKVSLYQDAHIPDNFVPRIPLAGGKNYEPQRCWEDIFDAISNAKHLIYITGWSVYAEIALVRDSRRPKPGGDVTIGELLKKKASEGVRVLLLVWDDRTSVDVLKKDGLMATHDEETENFFRGSDVHCILCPRNPDDGGSIVQSLQISTMFTHHQKIVVVDSEMPSRGGSEMRRIVSFVGGIDLCDGRYDTPFHSLFRTLDTVHHDDFHQPNFTGAAITKGGPREPWHDIHSRLEGPIAWDVMYNFEQRWSKQGGKDILVKLRDLSDIIITPSPVMFQEDHDVWNVQLFRSIDGGAAAGFPESPEAAAEAGLVSGKDNIIDRSIQDAYIHAIRRAKDFIYVENQYFLGSSFAWAADGITPEDINALHLIPKELSLKIVSKIEKGEKFRVYVVVPMWPEGLPESGSVQAILDWQRRTMEMMYKDVIQALRAQGLEEDPRNYLTFFCLGNREVKKDGEYEPAEKPDPDTDYMRAQEARRFMIYVHTKMMIVDDEYIIIGSANINQRSMDGARDSEIAMGGYQPHHLSHRQPARGQIHGFRMSLWYEHLGMLDETFLDPSSLECIEKVNRISDKYWDFYSSESLEHDLPGHLLRYPIGVASEGDITELPGFEFFPDTKARILGTKSDYLPPILTT</sequence>
<protein>
    <recommendedName>
        <fullName evidence="22">Phospholipase D alpha 1</fullName>
        <shortName evidence="22">AtPLDalpha1</shortName>
        <shortName evidence="22">PLD alpha 1</shortName>
        <ecNumber evidence="4 19">3.1.4.4</ecNumber>
    </recommendedName>
    <alternativeName>
        <fullName>Choline phosphatase 1</fullName>
    </alternativeName>
    <alternativeName>
        <fullName evidence="22">PLDalpha</fullName>
    </alternativeName>
    <alternativeName>
        <fullName>Phosphatidylcholine-hydrolyzing phospholipase D 1</fullName>
    </alternativeName>
</protein>
<gene>
    <name evidence="22" type="primary">PLDALPHA1</name>
    <name type="synonym">PLD1</name>
    <name evidence="24" type="ordered locus">At3g15730</name>
    <name evidence="25" type="ORF">MSJ11.13</name>
</gene>
<comment type="function">
    <text evidence="4 6 7 9 10 11 12 13 15 16 20 21">Hydrolyzes glycerol-phospholipids at the terminal phosphodiesteric bond to generate phosphatidic acids (PA). Plays an important role in various cellular processes, including phytohormone action and response to stress, characterized by acidification of the cell (PubMed:9437863). Involved in wound induction of jasmonic acid (PubMed:11090221). May be involved in membrane lipid remodeling (PubMed:11239826). Probably involved in freezing tolerance by modulating the cold-responsive genes and accumulation of osmolytes (PubMed:16949955). Can use phosphatidylcholine (PC), phosphatidylethanolamine (PE) and phosphatidylglycerol (PG) as substrates, both in presence or in absence of PIP2 (PubMed:9578608). Its main substrate is phosphatidylcholine (PubMed:11239826). Stimulates the intrinsic GTPase activity of GPA1 upon binding (PubMed:14594812). Mediates the abscisic acid effects on stomata through interaction with GPA1 and the production of phosphatidic acid that bind to ABI1 (PubMed:17261695, PubMed:17565616). Involved in seed aging and deterioration (PubMed:17565616). Involved in microtubule stabilization and salt tolerance (PubMed:23150630). Involved in abscisic acid-induced stomatal closure (PubMed:22392280).</text>
</comment>
<comment type="catalytic activity">
    <reaction evidence="4 19">
        <text>a 1,2-diacyl-sn-glycero-3-phosphocholine + H2O = a 1,2-diacyl-sn-glycero-3-phosphate + choline + H(+)</text>
        <dbReference type="Rhea" id="RHEA:14445"/>
        <dbReference type="ChEBI" id="CHEBI:15354"/>
        <dbReference type="ChEBI" id="CHEBI:15377"/>
        <dbReference type="ChEBI" id="CHEBI:15378"/>
        <dbReference type="ChEBI" id="CHEBI:57643"/>
        <dbReference type="ChEBI" id="CHEBI:58608"/>
        <dbReference type="EC" id="3.1.4.4"/>
    </reaction>
</comment>
<comment type="cofactor">
    <cofactor evidence="18 19">
        <name>Ca(2+)</name>
        <dbReference type="ChEBI" id="CHEBI:29108"/>
    </cofactor>
    <text evidence="19">Ca(2+) requirement for activity depends on pH. Active either under acidic conditions with micromolar levels of calcium (PIP2-dependent) or at neutral pH with millimolar levels of calcium (PIP2-independent).</text>
</comment>
<comment type="activity regulation">
    <text evidence="19">Not inhibited by neomycin.</text>
</comment>
<comment type="biophysicochemical properties">
    <phDependence>
        <text evidence="4">Optimum pH is 4.5 to 5.0 in the presence of micromolar levels of Ca(2+) and PIP2. Optimum pH is 5.5 to 6.5 in the presence of millimolar levels of Ca(2+).</text>
    </phDependence>
</comment>
<comment type="subunit">
    <text evidence="9 10 17">Interacts with GPA1 (PubMed:14594812, PubMed:16614222, PubMed:23913032). This binding inhibits PLDALPHA1 activity and is relieved by GTP (PubMed:14594812).</text>
</comment>
<comment type="interaction">
    <interactant intactId="EBI-962294">
        <id>Q38882</id>
    </interactant>
    <interactant intactId="EBI-443890">
        <id>P18064</id>
        <label>GPA1</label>
    </interactant>
    <organismsDiffer>false</organismsDiffer>
    <experiments>3</experiments>
</comment>
<comment type="subcellular location">
    <subcellularLocation>
        <location evidence="3 8">Cytoplasm</location>
    </subcellularLocation>
    <subcellularLocation>
        <location evidence="3 8">Cell membrane</location>
        <topology evidence="3">Peripheral membrane protein</topology>
    </subcellularLocation>
    <subcellularLocation>
        <location evidence="8">Mitochondrion membrane</location>
    </subcellularLocation>
    <subcellularLocation>
        <location evidence="8">Microsome membrane</location>
    </subcellularLocation>
    <subcellularLocation>
        <location evidence="3">Vacuole</location>
    </subcellularLocation>
    <subcellularLocation>
        <location evidence="3">Cytoplasmic vesicle</location>
        <location evidence="3">Clathrin-coated vesicle</location>
    </subcellularLocation>
    <text evidence="6">Not found in chloroplast or nuclei. The distribution of this conventional PLD between membrane-associated and soluble fractions varied from organ to organ and is calcium-regulated. Activation or wounding increases association of preexisting enzyme with membranes.</text>
</comment>
<comment type="tissue specificity">
    <text evidence="3">Highly expressed in roots, stems and flowers, moderately in leaves, seedlings and siliques. Not detected in seeds.</text>
</comment>
<comment type="induction">
    <text evidence="14 15 20">Up-regulated by abscisic acid and ethylene (PubMed:9437863). Up-regulated by salt, dehydration and osmotic stresses (PubMed:19017627). Not regulated by abscisic acid (PubMed:22392280).</text>
</comment>
<comment type="domain">
    <text evidence="5">C2 domain is a calcium-binding fold, and the binding induces conformational changes, promoting the protein association with membranes. These conformational changes occure at millimolar Ca(2+) concentrations. Also binds PIP2. A lower affinity toward calcium can be anticipated for PLD alpha due to the absence of two potential calcium ligands.</text>
</comment>
<comment type="disruption phenotype">
    <text evidence="10 13 14 15 16">No visible phenotype under normal growth conditions, but improved resistance of the seeds to deterioration during storage (PubMed:17565616). Insensitivity to abscisic acid for both promotion of stomatal closure and inhibition of stomatal opening (PubMed:16614222). Hypersensitivity to hyperosmotic stress (PubMed:19017627). Increased NaCl-induced disorganization of microtubules (PubMed:23150630). No effect on abscisic acid-induced stomatal closure (PubMed:22392280). Pldalpha1 and plddelta double mutants have a suppressed abscisic acid-induced stomatal closure (PubMed:22392280).</text>
</comment>
<comment type="similarity">
    <text evidence="23">Belongs to the phospholipase D family. C2-PLD subfamily.</text>
</comment>
<comment type="sequence caution" evidence="23">
    <conflict type="frameshift">
        <sequence resource="EMBL-CDS" id="AAC49274"/>
    </conflict>
</comment>
<comment type="sequence caution" evidence="23">
    <conflict type="erroneous initiation">
        <sequence resource="EMBL-CDS" id="AAL16110"/>
    </conflict>
    <text>Truncated N-terminus.</text>
</comment>
<evidence type="ECO:0000255" key="1">
    <source>
        <dbReference type="PROSITE-ProRule" id="PRU00041"/>
    </source>
</evidence>
<evidence type="ECO:0000255" key="2">
    <source>
        <dbReference type="PROSITE-ProRule" id="PRU00153"/>
    </source>
</evidence>
<evidence type="ECO:0000269" key="3">
    <source>
    </source>
</evidence>
<evidence type="ECO:0000269" key="4">
    <source>
    </source>
</evidence>
<evidence type="ECO:0000269" key="5">
    <source>
    </source>
</evidence>
<evidence type="ECO:0000269" key="6">
    <source>
    </source>
</evidence>
<evidence type="ECO:0000269" key="7">
    <source>
    </source>
</evidence>
<evidence type="ECO:0000269" key="8">
    <source>
    </source>
</evidence>
<evidence type="ECO:0000269" key="9">
    <source>
    </source>
</evidence>
<evidence type="ECO:0000269" key="10">
    <source>
    </source>
</evidence>
<evidence type="ECO:0000269" key="11">
    <source>
    </source>
</evidence>
<evidence type="ECO:0000269" key="12">
    <source>
    </source>
</evidence>
<evidence type="ECO:0000269" key="13">
    <source>
    </source>
</evidence>
<evidence type="ECO:0000269" key="14">
    <source>
    </source>
</evidence>
<evidence type="ECO:0000269" key="15">
    <source>
    </source>
</evidence>
<evidence type="ECO:0000269" key="16">
    <source>
    </source>
</evidence>
<evidence type="ECO:0000269" key="17">
    <source>
    </source>
</evidence>
<evidence type="ECO:0000269" key="18">
    <source>
    </source>
</evidence>
<evidence type="ECO:0000269" key="19">
    <source>
    </source>
</evidence>
<evidence type="ECO:0000269" key="20">
    <source>
    </source>
</evidence>
<evidence type="ECO:0000269" key="21">
    <source>
    </source>
</evidence>
<evidence type="ECO:0000303" key="22">
    <source>
    </source>
</evidence>
<evidence type="ECO:0000305" key="23"/>
<evidence type="ECO:0000312" key="24">
    <source>
        <dbReference type="Araport" id="AT3G15730"/>
    </source>
</evidence>
<evidence type="ECO:0000312" key="25">
    <source>
        <dbReference type="EMBL" id="BAB02304.1"/>
    </source>
</evidence>
<evidence type="ECO:0007744" key="26">
    <source>
        <dbReference type="PDB" id="6KZ8"/>
    </source>
</evidence>
<evidence type="ECO:0007744" key="27">
    <source>
        <dbReference type="PDB" id="6KZ9"/>
    </source>
</evidence>
<evidence type="ECO:0007829" key="28">
    <source>
        <dbReference type="PDB" id="6KZ8"/>
    </source>
</evidence>
<evidence type="ECO:0007829" key="29">
    <source>
        <dbReference type="PDB" id="6KZ9"/>
    </source>
</evidence>
<accession>Q38882</accession>
<accession>Q0WV84</accession>
<accession>Q944M4</accession>
<accession>Q9LW06</accession>
<dbReference type="EC" id="3.1.4.4" evidence="4 19"/>
<dbReference type="EMBL" id="U36381">
    <property type="protein sequence ID" value="AAC49274.1"/>
    <property type="status" value="ALT_FRAME"/>
    <property type="molecule type" value="mRNA"/>
</dbReference>
<dbReference type="EMBL" id="AB017071">
    <property type="protein sequence ID" value="BAB02304.1"/>
    <property type="molecule type" value="Genomic_DNA"/>
</dbReference>
<dbReference type="EMBL" id="CP002686">
    <property type="protein sequence ID" value="AEE75720.1"/>
    <property type="molecule type" value="Genomic_DNA"/>
</dbReference>
<dbReference type="EMBL" id="AK226887">
    <property type="protein sequence ID" value="BAE98964.1"/>
    <property type="molecule type" value="mRNA"/>
</dbReference>
<dbReference type="EMBL" id="AF428278">
    <property type="protein sequence ID" value="AAL16110.1"/>
    <property type="status" value="ALT_INIT"/>
    <property type="molecule type" value="mRNA"/>
</dbReference>
<dbReference type="RefSeq" id="NP_188194.1">
    <property type="nucleotide sequence ID" value="NM_112443.3"/>
</dbReference>
<dbReference type="PDB" id="6KZ8">
    <property type="method" value="X-ray"/>
    <property type="resolution" value="2.29 A"/>
    <property type="chains" value="A/B=1-810"/>
</dbReference>
<dbReference type="PDB" id="6KZ9">
    <property type="method" value="X-ray"/>
    <property type="resolution" value="1.80 A"/>
    <property type="chains" value="A=1-810"/>
</dbReference>
<dbReference type="PDBsum" id="6KZ8"/>
<dbReference type="PDBsum" id="6KZ9"/>
<dbReference type="SMR" id="Q38882"/>
<dbReference type="BioGRID" id="6150">
    <property type="interactions" value="9"/>
</dbReference>
<dbReference type="FunCoup" id="Q38882">
    <property type="interactions" value="1727"/>
</dbReference>
<dbReference type="IntAct" id="Q38882">
    <property type="interactions" value="6"/>
</dbReference>
<dbReference type="STRING" id="3702.Q38882"/>
<dbReference type="iPTMnet" id="Q38882"/>
<dbReference type="PaxDb" id="3702-AT3G15730.1"/>
<dbReference type="ProteomicsDB" id="236630"/>
<dbReference type="DNASU" id="820816"/>
<dbReference type="EnsemblPlants" id="AT3G15730.1">
    <property type="protein sequence ID" value="AT3G15730.1"/>
    <property type="gene ID" value="AT3G15730"/>
</dbReference>
<dbReference type="GeneID" id="820816"/>
<dbReference type="Gramene" id="AT3G15730.1">
    <property type="protein sequence ID" value="AT3G15730.1"/>
    <property type="gene ID" value="AT3G15730"/>
</dbReference>
<dbReference type="KEGG" id="ath:AT3G15730"/>
<dbReference type="Araport" id="AT3G15730"/>
<dbReference type="TAIR" id="AT3G15730">
    <property type="gene designation" value="PLDALPHA1"/>
</dbReference>
<dbReference type="eggNOG" id="KOG1329">
    <property type="taxonomic scope" value="Eukaryota"/>
</dbReference>
<dbReference type="HOGENOM" id="CLU_004684_0_0_1"/>
<dbReference type="InParanoid" id="Q38882"/>
<dbReference type="OMA" id="PNWGRGI"/>
<dbReference type="OrthoDB" id="14911at2759"/>
<dbReference type="PhylomeDB" id="Q38882"/>
<dbReference type="BioCyc" id="ARA:AT3G15730-MONOMER"/>
<dbReference type="BioCyc" id="MetaCyc:AT3G15730-MONOMER"/>
<dbReference type="BRENDA" id="3.1.4.4">
    <property type="organism ID" value="399"/>
</dbReference>
<dbReference type="CD-CODE" id="4299E36E">
    <property type="entry name" value="Nucleolus"/>
</dbReference>
<dbReference type="PRO" id="PR:Q38882"/>
<dbReference type="Proteomes" id="UP000006548">
    <property type="component" value="Chromosome 3"/>
</dbReference>
<dbReference type="ExpressionAtlas" id="Q38882">
    <property type="expression patterns" value="baseline and differential"/>
</dbReference>
<dbReference type="GO" id="GO:0009507">
    <property type="term" value="C:chloroplast"/>
    <property type="evidence" value="ECO:0007005"/>
    <property type="project" value="TAIR"/>
</dbReference>
<dbReference type="GO" id="GO:0030136">
    <property type="term" value="C:clathrin-coated vesicle"/>
    <property type="evidence" value="ECO:0000314"/>
    <property type="project" value="TAIR"/>
</dbReference>
<dbReference type="GO" id="GO:0005829">
    <property type="term" value="C:cytosol"/>
    <property type="evidence" value="ECO:0007005"/>
    <property type="project" value="TAIR"/>
</dbReference>
<dbReference type="GO" id="GO:0005783">
    <property type="term" value="C:endoplasmic reticulum"/>
    <property type="evidence" value="ECO:0007669"/>
    <property type="project" value="UniProtKB-KW"/>
</dbReference>
<dbReference type="GO" id="GO:0016020">
    <property type="term" value="C:membrane"/>
    <property type="evidence" value="ECO:0000314"/>
    <property type="project" value="TAIR"/>
</dbReference>
<dbReference type="GO" id="GO:0031966">
    <property type="term" value="C:mitochondrial membrane"/>
    <property type="evidence" value="ECO:0007669"/>
    <property type="project" value="UniProtKB-SubCell"/>
</dbReference>
<dbReference type="GO" id="GO:0005739">
    <property type="term" value="C:mitochondrion"/>
    <property type="evidence" value="ECO:0000314"/>
    <property type="project" value="TAIR"/>
</dbReference>
<dbReference type="GO" id="GO:0005634">
    <property type="term" value="C:nucleus"/>
    <property type="evidence" value="ECO:0000314"/>
    <property type="project" value="TAIR"/>
</dbReference>
<dbReference type="GO" id="GO:0005886">
    <property type="term" value="C:plasma membrane"/>
    <property type="evidence" value="ECO:0000314"/>
    <property type="project" value="TAIR"/>
</dbReference>
<dbReference type="GO" id="GO:0009506">
    <property type="term" value="C:plasmodesma"/>
    <property type="evidence" value="ECO:0007005"/>
    <property type="project" value="TAIR"/>
</dbReference>
<dbReference type="GO" id="GO:0005773">
    <property type="term" value="C:vacuole"/>
    <property type="evidence" value="ECO:0007669"/>
    <property type="project" value="UniProtKB-SubCell"/>
</dbReference>
<dbReference type="GO" id="GO:0005509">
    <property type="term" value="F:calcium ion binding"/>
    <property type="evidence" value="ECO:0007669"/>
    <property type="project" value="InterPro"/>
</dbReference>
<dbReference type="GO" id="GO:0005096">
    <property type="term" value="F:GTPase activator activity"/>
    <property type="evidence" value="ECO:0000314"/>
    <property type="project" value="TAIR"/>
</dbReference>
<dbReference type="GO" id="GO:0005546">
    <property type="term" value="F:phosphatidylinositol-4,5-bisphosphate binding"/>
    <property type="evidence" value="ECO:0000314"/>
    <property type="project" value="TAIR"/>
</dbReference>
<dbReference type="GO" id="GO:0004620">
    <property type="term" value="F:phospholipase activity"/>
    <property type="evidence" value="ECO:0000314"/>
    <property type="project" value="TAIR"/>
</dbReference>
<dbReference type="GO" id="GO:0004630">
    <property type="term" value="F:phospholipase D activity"/>
    <property type="evidence" value="ECO:0000314"/>
    <property type="project" value="TAIR"/>
</dbReference>
<dbReference type="GO" id="GO:0009738">
    <property type="term" value="P:abscisic acid-activated signaling pathway"/>
    <property type="evidence" value="ECO:0000315"/>
    <property type="project" value="TAIR"/>
</dbReference>
<dbReference type="GO" id="GO:0009873">
    <property type="term" value="P:ethylene-activated signaling pathway"/>
    <property type="evidence" value="ECO:0007669"/>
    <property type="project" value="UniProtKB-KW"/>
</dbReference>
<dbReference type="GO" id="GO:0006631">
    <property type="term" value="P:fatty acid metabolic process"/>
    <property type="evidence" value="ECO:0000315"/>
    <property type="project" value="TAIR"/>
</dbReference>
<dbReference type="GO" id="GO:0010358">
    <property type="term" value="P:leaf shaping"/>
    <property type="evidence" value="ECO:0000315"/>
    <property type="project" value="TAIR"/>
</dbReference>
<dbReference type="GO" id="GO:0016042">
    <property type="term" value="P:lipid catabolic process"/>
    <property type="evidence" value="ECO:0007669"/>
    <property type="project" value="UniProtKB-KW"/>
</dbReference>
<dbReference type="GO" id="GO:0046470">
    <property type="term" value="P:phosphatidylcholine metabolic process"/>
    <property type="evidence" value="ECO:0007669"/>
    <property type="project" value="InterPro"/>
</dbReference>
<dbReference type="GO" id="GO:0009789">
    <property type="term" value="P:positive regulation of abscisic acid-activated signaling pathway"/>
    <property type="evidence" value="ECO:0000315"/>
    <property type="project" value="TAIR"/>
</dbReference>
<dbReference type="GO" id="GO:0010119">
    <property type="term" value="P:regulation of stomatal movement"/>
    <property type="evidence" value="ECO:0000315"/>
    <property type="project" value="TAIR"/>
</dbReference>
<dbReference type="GO" id="GO:0009737">
    <property type="term" value="P:response to abscisic acid"/>
    <property type="evidence" value="ECO:0000315"/>
    <property type="project" value="TAIR"/>
</dbReference>
<dbReference type="GO" id="GO:0009845">
    <property type="term" value="P:seed germination"/>
    <property type="evidence" value="ECO:0000315"/>
    <property type="project" value="TAIR"/>
</dbReference>
<dbReference type="CDD" id="cd04015">
    <property type="entry name" value="C2_plant_PLD"/>
    <property type="match status" value="1"/>
</dbReference>
<dbReference type="CDD" id="cd09197">
    <property type="entry name" value="PLDc_pPLDalpha_1"/>
    <property type="match status" value="1"/>
</dbReference>
<dbReference type="CDD" id="cd09199">
    <property type="entry name" value="PLDc_pPLDalpha_2"/>
    <property type="match status" value="1"/>
</dbReference>
<dbReference type="FunFam" id="3.30.870.10:FF:000027">
    <property type="entry name" value="Phospholipase D"/>
    <property type="match status" value="1"/>
</dbReference>
<dbReference type="FunFam" id="2.60.40.150:FF:000266">
    <property type="entry name" value="Phospholipase D alpha 1"/>
    <property type="match status" value="1"/>
</dbReference>
<dbReference type="FunFam" id="3.30.870.10:FF:000025">
    <property type="entry name" value="Phospholipase D delta"/>
    <property type="match status" value="1"/>
</dbReference>
<dbReference type="Gene3D" id="2.60.40.150">
    <property type="entry name" value="C2 domain"/>
    <property type="match status" value="1"/>
</dbReference>
<dbReference type="Gene3D" id="3.30.870.10">
    <property type="entry name" value="Endonuclease Chain A"/>
    <property type="match status" value="2"/>
</dbReference>
<dbReference type="InterPro" id="IPR000008">
    <property type="entry name" value="C2_dom"/>
</dbReference>
<dbReference type="InterPro" id="IPR035892">
    <property type="entry name" value="C2_domain_sf"/>
</dbReference>
<dbReference type="InterPro" id="IPR001736">
    <property type="entry name" value="PLipase_D/transphosphatidylase"/>
</dbReference>
<dbReference type="InterPro" id="IPR024632">
    <property type="entry name" value="PLipase_D_C"/>
</dbReference>
<dbReference type="InterPro" id="IPR015679">
    <property type="entry name" value="PLipase_D_fam"/>
</dbReference>
<dbReference type="InterPro" id="IPR011402">
    <property type="entry name" value="PLipase_D_pln"/>
</dbReference>
<dbReference type="PANTHER" id="PTHR18896">
    <property type="entry name" value="PHOSPHOLIPASE D"/>
    <property type="match status" value="1"/>
</dbReference>
<dbReference type="PANTHER" id="PTHR18896:SF115">
    <property type="entry name" value="PHOSPHOLIPASE D ALPHA 1"/>
    <property type="match status" value="1"/>
</dbReference>
<dbReference type="Pfam" id="PF00168">
    <property type="entry name" value="C2"/>
    <property type="match status" value="1"/>
</dbReference>
<dbReference type="Pfam" id="PF12357">
    <property type="entry name" value="PLD_C"/>
    <property type="match status" value="1"/>
</dbReference>
<dbReference type="Pfam" id="PF00614">
    <property type="entry name" value="PLDc"/>
    <property type="match status" value="2"/>
</dbReference>
<dbReference type="PIRSF" id="PIRSF036470">
    <property type="entry name" value="PLD_plant"/>
    <property type="match status" value="1"/>
</dbReference>
<dbReference type="SMART" id="SM00239">
    <property type="entry name" value="C2"/>
    <property type="match status" value="1"/>
</dbReference>
<dbReference type="SMART" id="SM00155">
    <property type="entry name" value="PLDc"/>
    <property type="match status" value="2"/>
</dbReference>
<dbReference type="SUPFAM" id="SSF49562">
    <property type="entry name" value="C2 domain (Calcium/lipid-binding domain, CaLB)"/>
    <property type="match status" value="1"/>
</dbReference>
<dbReference type="SUPFAM" id="SSF56024">
    <property type="entry name" value="Phospholipase D/nuclease"/>
    <property type="match status" value="2"/>
</dbReference>
<dbReference type="PROSITE" id="PS50004">
    <property type="entry name" value="C2"/>
    <property type="match status" value="1"/>
</dbReference>
<dbReference type="PROSITE" id="PS50035">
    <property type="entry name" value="PLD"/>
    <property type="match status" value="2"/>
</dbReference>
<organism>
    <name type="scientific">Arabidopsis thaliana</name>
    <name type="common">Mouse-ear cress</name>
    <dbReference type="NCBI Taxonomy" id="3702"/>
    <lineage>
        <taxon>Eukaryota</taxon>
        <taxon>Viridiplantae</taxon>
        <taxon>Streptophyta</taxon>
        <taxon>Embryophyta</taxon>
        <taxon>Tracheophyta</taxon>
        <taxon>Spermatophyta</taxon>
        <taxon>Magnoliopsida</taxon>
        <taxon>eudicotyledons</taxon>
        <taxon>Gunneridae</taxon>
        <taxon>Pentapetalae</taxon>
        <taxon>rosids</taxon>
        <taxon>malvids</taxon>
        <taxon>Brassicales</taxon>
        <taxon>Brassicaceae</taxon>
        <taxon>Camelineae</taxon>
        <taxon>Arabidopsis</taxon>
    </lineage>
</organism>
<proteinExistence type="evidence at protein level"/>
<name>PLDA1_ARATH</name>